<sequence length="268" mass="28297">MTVPDPARPAASPSARPRVLVANDDGIFAPGIKALGLALSEWADVVVVAPDVEQSAVGHGITIRRPLRFKHTAAAGFGDIPAYRVDGTPADCVVLGVHLLGRPDLVVSGINIGPNLGEDLTHSGTVAAAIEGLTLGLPSIAFSQFANEAGEYDFGPSAAYASRLAREVCCRGLPPRVLLNVNFPRVSPRGVRVTEVGLHRWEDSVVTRQDPEGRDYHWVAGVSTAHDGHDEQTDYGAVQAGFISVSPVRLDLTARDLIGELTQALPPL</sequence>
<protein>
    <recommendedName>
        <fullName evidence="1">5'-nucleotidase SurE</fullName>
        <ecNumber evidence="1">3.1.3.5</ecNumber>
    </recommendedName>
    <alternativeName>
        <fullName evidence="1">Nucleoside 5'-monophosphate phosphohydrolase</fullName>
    </alternativeName>
</protein>
<keyword id="KW-0963">Cytoplasm</keyword>
<keyword id="KW-0378">Hydrolase</keyword>
<keyword id="KW-0479">Metal-binding</keyword>
<keyword id="KW-0547">Nucleotide-binding</keyword>
<keyword id="KW-1185">Reference proteome</keyword>
<feature type="chain" id="PRO_0000111808" description="5'-nucleotidase SurE">
    <location>
        <begin position="1"/>
        <end position="268"/>
    </location>
</feature>
<feature type="binding site" evidence="1">
    <location>
        <position position="24"/>
    </location>
    <ligand>
        <name>a divalent metal cation</name>
        <dbReference type="ChEBI" id="CHEBI:60240"/>
    </ligand>
</feature>
<feature type="binding site" evidence="1">
    <location>
        <position position="25"/>
    </location>
    <ligand>
        <name>a divalent metal cation</name>
        <dbReference type="ChEBI" id="CHEBI:60240"/>
    </ligand>
</feature>
<feature type="binding site" evidence="1">
    <location>
        <position position="55"/>
    </location>
    <ligand>
        <name>a divalent metal cation</name>
        <dbReference type="ChEBI" id="CHEBI:60240"/>
    </ligand>
</feature>
<feature type="binding site" evidence="1">
    <location>
        <position position="111"/>
    </location>
    <ligand>
        <name>a divalent metal cation</name>
        <dbReference type="ChEBI" id="CHEBI:60240"/>
    </ligand>
</feature>
<gene>
    <name evidence="1" type="primary">surE</name>
    <name type="ordered locus">DR_2397</name>
</gene>
<proteinExistence type="inferred from homology"/>
<organism>
    <name type="scientific">Deinococcus radiodurans (strain ATCC 13939 / DSM 20539 / JCM 16871 / CCUG 27074 / LMG 4051 / NBRC 15346 / NCIMB 9279 / VKM B-1422 / R1)</name>
    <dbReference type="NCBI Taxonomy" id="243230"/>
    <lineage>
        <taxon>Bacteria</taxon>
        <taxon>Thermotogati</taxon>
        <taxon>Deinococcota</taxon>
        <taxon>Deinococci</taxon>
        <taxon>Deinococcales</taxon>
        <taxon>Deinococcaceae</taxon>
        <taxon>Deinococcus</taxon>
    </lineage>
</organism>
<comment type="function">
    <text evidence="1">Nucleotidase that shows phosphatase activity on nucleoside 5'-monophosphates.</text>
</comment>
<comment type="catalytic activity">
    <reaction evidence="1">
        <text>a ribonucleoside 5'-phosphate + H2O = a ribonucleoside + phosphate</text>
        <dbReference type="Rhea" id="RHEA:12484"/>
        <dbReference type="ChEBI" id="CHEBI:15377"/>
        <dbReference type="ChEBI" id="CHEBI:18254"/>
        <dbReference type="ChEBI" id="CHEBI:43474"/>
        <dbReference type="ChEBI" id="CHEBI:58043"/>
        <dbReference type="EC" id="3.1.3.5"/>
    </reaction>
</comment>
<comment type="cofactor">
    <cofactor evidence="1">
        <name>a divalent metal cation</name>
        <dbReference type="ChEBI" id="CHEBI:60240"/>
    </cofactor>
    <text evidence="1">Binds 1 divalent metal cation per subunit.</text>
</comment>
<comment type="subcellular location">
    <subcellularLocation>
        <location evidence="1">Cytoplasm</location>
    </subcellularLocation>
</comment>
<comment type="similarity">
    <text evidence="1">Belongs to the SurE nucleotidase family.</text>
</comment>
<accession>Q9RRT8</accession>
<reference key="1">
    <citation type="journal article" date="1999" name="Science">
        <title>Genome sequence of the radioresistant bacterium Deinococcus radiodurans R1.</title>
        <authorList>
            <person name="White O."/>
            <person name="Eisen J.A."/>
            <person name="Heidelberg J.F."/>
            <person name="Hickey E.K."/>
            <person name="Peterson J.D."/>
            <person name="Dodson R.J."/>
            <person name="Haft D.H."/>
            <person name="Gwinn M.L."/>
            <person name="Nelson W.C."/>
            <person name="Richardson D.L."/>
            <person name="Moffat K.S."/>
            <person name="Qin H."/>
            <person name="Jiang L."/>
            <person name="Pamphile W."/>
            <person name="Crosby M."/>
            <person name="Shen M."/>
            <person name="Vamathevan J.J."/>
            <person name="Lam P."/>
            <person name="McDonald L.A."/>
            <person name="Utterback T.R."/>
            <person name="Zalewski C."/>
            <person name="Makarova K.S."/>
            <person name="Aravind L."/>
            <person name="Daly M.J."/>
            <person name="Minton K.W."/>
            <person name="Fleischmann R.D."/>
            <person name="Ketchum K.A."/>
            <person name="Nelson K.E."/>
            <person name="Salzberg S.L."/>
            <person name="Smith H.O."/>
            <person name="Venter J.C."/>
            <person name="Fraser C.M."/>
        </authorList>
    </citation>
    <scope>NUCLEOTIDE SEQUENCE [LARGE SCALE GENOMIC DNA]</scope>
    <source>
        <strain>ATCC 13939 / DSM 20539 / JCM 16871 / CCUG 27074 / LMG 4051 / NBRC 15346 / NCIMB 9279 / VKM B-1422 / R1</strain>
    </source>
</reference>
<name>SURE_DEIRA</name>
<evidence type="ECO:0000255" key="1">
    <source>
        <dbReference type="HAMAP-Rule" id="MF_00060"/>
    </source>
</evidence>
<dbReference type="EC" id="3.1.3.5" evidence="1"/>
<dbReference type="EMBL" id="AE000513">
    <property type="protein sequence ID" value="AAF11943.1"/>
    <property type="molecule type" value="Genomic_DNA"/>
</dbReference>
<dbReference type="PIR" id="B75279">
    <property type="entry name" value="B75279"/>
</dbReference>
<dbReference type="RefSeq" id="NP_296118.1">
    <property type="nucleotide sequence ID" value="NC_001263.1"/>
</dbReference>
<dbReference type="RefSeq" id="WP_010889023.1">
    <property type="nucleotide sequence ID" value="NC_001263.1"/>
</dbReference>
<dbReference type="SMR" id="Q9RRT8"/>
<dbReference type="STRING" id="243230.DR_2397"/>
<dbReference type="PaxDb" id="243230-DR_2397"/>
<dbReference type="EnsemblBacteria" id="AAF11943">
    <property type="protein sequence ID" value="AAF11943"/>
    <property type="gene ID" value="DR_2397"/>
</dbReference>
<dbReference type="GeneID" id="69518648"/>
<dbReference type="KEGG" id="dra:DR_2397"/>
<dbReference type="PATRIC" id="fig|243230.17.peg.2633"/>
<dbReference type="eggNOG" id="COG0496">
    <property type="taxonomic scope" value="Bacteria"/>
</dbReference>
<dbReference type="HOGENOM" id="CLU_045192_1_3_0"/>
<dbReference type="InParanoid" id="Q9RRT8"/>
<dbReference type="OrthoDB" id="9780815at2"/>
<dbReference type="Proteomes" id="UP000002524">
    <property type="component" value="Chromosome 1"/>
</dbReference>
<dbReference type="GO" id="GO:0005737">
    <property type="term" value="C:cytoplasm"/>
    <property type="evidence" value="ECO:0007669"/>
    <property type="project" value="UniProtKB-SubCell"/>
</dbReference>
<dbReference type="GO" id="GO:0008254">
    <property type="term" value="F:3'-nucleotidase activity"/>
    <property type="evidence" value="ECO:0000318"/>
    <property type="project" value="GO_Central"/>
</dbReference>
<dbReference type="GO" id="GO:0008253">
    <property type="term" value="F:5'-nucleotidase activity"/>
    <property type="evidence" value="ECO:0000318"/>
    <property type="project" value="GO_Central"/>
</dbReference>
<dbReference type="GO" id="GO:0004309">
    <property type="term" value="F:exopolyphosphatase activity"/>
    <property type="evidence" value="ECO:0000318"/>
    <property type="project" value="GO_Central"/>
</dbReference>
<dbReference type="GO" id="GO:0046872">
    <property type="term" value="F:metal ion binding"/>
    <property type="evidence" value="ECO:0007669"/>
    <property type="project" value="UniProtKB-UniRule"/>
</dbReference>
<dbReference type="GO" id="GO:0000166">
    <property type="term" value="F:nucleotide binding"/>
    <property type="evidence" value="ECO:0007669"/>
    <property type="project" value="UniProtKB-KW"/>
</dbReference>
<dbReference type="FunFam" id="3.40.1210.10:FF:000001">
    <property type="entry name" value="5'/3'-nucleotidase SurE"/>
    <property type="match status" value="1"/>
</dbReference>
<dbReference type="Gene3D" id="3.40.1210.10">
    <property type="entry name" value="Survival protein SurE-like phosphatase/nucleotidase"/>
    <property type="match status" value="1"/>
</dbReference>
<dbReference type="HAMAP" id="MF_00060">
    <property type="entry name" value="SurE"/>
    <property type="match status" value="1"/>
</dbReference>
<dbReference type="InterPro" id="IPR030048">
    <property type="entry name" value="SurE"/>
</dbReference>
<dbReference type="InterPro" id="IPR002828">
    <property type="entry name" value="SurE-like_Pase/nucleotidase"/>
</dbReference>
<dbReference type="InterPro" id="IPR036523">
    <property type="entry name" value="SurE-like_sf"/>
</dbReference>
<dbReference type="NCBIfam" id="NF001490">
    <property type="entry name" value="PRK00346.1-4"/>
    <property type="match status" value="1"/>
</dbReference>
<dbReference type="NCBIfam" id="TIGR00087">
    <property type="entry name" value="surE"/>
    <property type="match status" value="1"/>
</dbReference>
<dbReference type="PANTHER" id="PTHR30457">
    <property type="entry name" value="5'-NUCLEOTIDASE SURE"/>
    <property type="match status" value="1"/>
</dbReference>
<dbReference type="PANTHER" id="PTHR30457:SF12">
    <property type="entry name" value="5'_3'-NUCLEOTIDASE SURE"/>
    <property type="match status" value="1"/>
</dbReference>
<dbReference type="Pfam" id="PF01975">
    <property type="entry name" value="SurE"/>
    <property type="match status" value="1"/>
</dbReference>
<dbReference type="SUPFAM" id="SSF64167">
    <property type="entry name" value="SurE-like"/>
    <property type="match status" value="1"/>
</dbReference>